<proteinExistence type="inferred from homology"/>
<comment type="function">
    <text>Actins are highly conserved proteins that are involved in various types of cell motility and are ubiquitously expressed in all eukaryotic cells.</text>
</comment>
<comment type="catalytic activity">
    <reaction evidence="1">
        <text>ATP + H2O = ADP + phosphate + H(+)</text>
        <dbReference type="Rhea" id="RHEA:13065"/>
        <dbReference type="ChEBI" id="CHEBI:15377"/>
        <dbReference type="ChEBI" id="CHEBI:15378"/>
        <dbReference type="ChEBI" id="CHEBI:30616"/>
        <dbReference type="ChEBI" id="CHEBI:43474"/>
        <dbReference type="ChEBI" id="CHEBI:456216"/>
    </reaction>
</comment>
<comment type="subcellular location">
    <subcellularLocation>
        <location>Cytoplasm</location>
        <location>Cytoskeleton</location>
    </subcellularLocation>
</comment>
<comment type="similarity">
    <text evidence="2">Belongs to the actin family.</text>
</comment>
<feature type="chain" id="PRO_0000088939" description="Actin, cytoplasmic">
    <location>
        <begin position="1"/>
        <end position="379"/>
    </location>
</feature>
<evidence type="ECO:0000250" key="1">
    <source>
        <dbReference type="UniProtKB" id="P68137"/>
    </source>
</evidence>
<evidence type="ECO:0000305" key="2"/>
<reference key="1">
    <citation type="journal article" date="1989" name="Proc. Natl. Acad. Sci. U.S.A.">
        <title>Differential use of termination codons in ciliated protozoa.</title>
        <authorList>
            <person name="Harper D.S."/>
            <person name="Jahn C.L."/>
        </authorList>
    </citation>
    <scope>NUCLEOTIDE SEQUENCE [GENOMIC DNA]</scope>
</reference>
<accession>P20360</accession>
<protein>
    <recommendedName>
        <fullName>Actin, cytoplasmic</fullName>
        <ecNumber evidence="1">3.6.4.-</ecNumber>
    </recommendedName>
</protein>
<sequence length="379" mass="42624">MSEEENAKEAIVVDNGSGVVKAGFAGENQPCSVFPSVVAKPKTKQVIVGGAGNKDCFVGDERQQKRGVCTLSYPIKSGMIKDWDGMQKIWDYTFYNELRIETENHPVLLTEAPLNPKQNRENMCRIMFEEYDFPSMYIQIQAVLSLYSAGRTTGIVVDSGDGVTHVVPIFEGYQIPHAIEKILLAGRDLTDYMCRILKDDDYHFETTAEKETVRDIKEKLCYVADDYEAELKKAGEGGELEESYALPDGRPLKISTQRFQCPEFLFQPDLGGRECKSVHQLTYDSIMTCDLDVRKDLYANIILSGGTTMFPGLGERLYKEMKDLAPQTMKVKVIASPDRKYAVWRGGSTLAKLSTFAGMWVTKEDYAEFGESIVHRKCI</sequence>
<organism>
    <name type="scientific">Euplotes crassus</name>
    <dbReference type="NCBI Taxonomy" id="5936"/>
    <lineage>
        <taxon>Eukaryota</taxon>
        <taxon>Sar</taxon>
        <taxon>Alveolata</taxon>
        <taxon>Ciliophora</taxon>
        <taxon>Intramacronucleata</taxon>
        <taxon>Spirotrichea</taxon>
        <taxon>Hypotrichia</taxon>
        <taxon>Euplotida</taxon>
        <taxon>Euplotidae</taxon>
        <taxon>Moneuplotes</taxon>
    </lineage>
</organism>
<keyword id="KW-0067">ATP-binding</keyword>
<keyword id="KW-0963">Cytoplasm</keyword>
<keyword id="KW-0206">Cytoskeleton</keyword>
<keyword id="KW-0378">Hydrolase</keyword>
<keyword id="KW-0547">Nucleotide-binding</keyword>
<dbReference type="EC" id="3.6.4.-" evidence="1"/>
<dbReference type="EMBL" id="J04533">
    <property type="protein sequence ID" value="AAA29122.1"/>
    <property type="molecule type" value="Genomic_DNA"/>
</dbReference>
<dbReference type="PIR" id="A30309">
    <property type="entry name" value="A30309"/>
</dbReference>
<dbReference type="SMR" id="P20360"/>
<dbReference type="GO" id="GO:0005737">
    <property type="term" value="C:cytoplasm"/>
    <property type="evidence" value="ECO:0007669"/>
    <property type="project" value="UniProtKB-KW"/>
</dbReference>
<dbReference type="GO" id="GO:0005856">
    <property type="term" value="C:cytoskeleton"/>
    <property type="evidence" value="ECO:0007669"/>
    <property type="project" value="UniProtKB-SubCell"/>
</dbReference>
<dbReference type="GO" id="GO:0005524">
    <property type="term" value="F:ATP binding"/>
    <property type="evidence" value="ECO:0007669"/>
    <property type="project" value="UniProtKB-KW"/>
</dbReference>
<dbReference type="GO" id="GO:0016787">
    <property type="term" value="F:hydrolase activity"/>
    <property type="evidence" value="ECO:0007669"/>
    <property type="project" value="UniProtKB-KW"/>
</dbReference>
<dbReference type="CDD" id="cd13397">
    <property type="entry name" value="ASKHA_NBD_actin_Arp-T1-3"/>
    <property type="match status" value="1"/>
</dbReference>
<dbReference type="FunFam" id="3.90.640.10:FF:000007">
    <property type="entry name" value="Actin like 7B"/>
    <property type="match status" value="1"/>
</dbReference>
<dbReference type="FunFam" id="3.30.420.40:FF:000218">
    <property type="entry name" value="actin, alpha sarcomeric/skeletal-like"/>
    <property type="match status" value="1"/>
</dbReference>
<dbReference type="FunFam" id="3.30.420.40:FF:000050">
    <property type="entry name" value="Actin, alpha skeletal muscle"/>
    <property type="match status" value="1"/>
</dbReference>
<dbReference type="FunFam" id="3.30.420.40:FF:000058">
    <property type="entry name" value="Putative actin-related protein 5"/>
    <property type="match status" value="1"/>
</dbReference>
<dbReference type="Gene3D" id="3.30.420.40">
    <property type="match status" value="2"/>
</dbReference>
<dbReference type="Gene3D" id="3.90.640.10">
    <property type="entry name" value="Actin, Chain A, domain 4"/>
    <property type="match status" value="1"/>
</dbReference>
<dbReference type="InterPro" id="IPR004000">
    <property type="entry name" value="Actin"/>
</dbReference>
<dbReference type="InterPro" id="IPR020902">
    <property type="entry name" value="Actin/actin-like_CS"/>
</dbReference>
<dbReference type="InterPro" id="IPR004001">
    <property type="entry name" value="Actin_CS"/>
</dbReference>
<dbReference type="InterPro" id="IPR043129">
    <property type="entry name" value="ATPase_NBD"/>
</dbReference>
<dbReference type="PANTHER" id="PTHR11937">
    <property type="entry name" value="ACTIN"/>
    <property type="match status" value="1"/>
</dbReference>
<dbReference type="Pfam" id="PF00022">
    <property type="entry name" value="Actin"/>
    <property type="match status" value="1"/>
</dbReference>
<dbReference type="PRINTS" id="PR00190">
    <property type="entry name" value="ACTIN"/>
</dbReference>
<dbReference type="SMART" id="SM00268">
    <property type="entry name" value="ACTIN"/>
    <property type="match status" value="1"/>
</dbReference>
<dbReference type="SUPFAM" id="SSF53067">
    <property type="entry name" value="Actin-like ATPase domain"/>
    <property type="match status" value="2"/>
</dbReference>
<dbReference type="PROSITE" id="PS00406">
    <property type="entry name" value="ACTINS_1"/>
    <property type="match status" value="1"/>
</dbReference>
<dbReference type="PROSITE" id="PS01132">
    <property type="entry name" value="ACTINS_ACT_LIKE"/>
    <property type="match status" value="1"/>
</dbReference>
<name>ACT_EUPCR</name>